<sequence length="251" mass="27095">MRGNPLIHLLAISFLCILSMVYSQLCPAPCACPWTPPQCPPGVPLVLDGCGCCRVCARRLGESCDHLHVCDPSQGLVCQPGAGPSGRGAVCLFEEDDGSCEVNGRRYLDGETFKPNCRVLCRCDDGGFTCLPLCSEDVRLPSWDCPRPRRIQVPGRCCPEWVCDQAVMQPAIQPSSAQGHQLSALVTPASADGPCPNWSTAWGPCSTTCGLGIATRVSNQNRFCQLEIQRRLCLSRPCLASRSHGSWNSAF</sequence>
<accession>Q9Z0G4</accession>
<accession>Q8CIC8</accession>
<gene>
    <name type="primary">Ccn5</name>
    <name type="synonym">Ctgfl</name>
    <name type="synonym">Wisp2</name>
</gene>
<evidence type="ECO:0000250" key="1"/>
<evidence type="ECO:0000255" key="2"/>
<evidence type="ECO:0000255" key="3">
    <source>
        <dbReference type="PROSITE-ProRule" id="PRU00210"/>
    </source>
</evidence>
<evidence type="ECO:0000255" key="4">
    <source>
        <dbReference type="PROSITE-ProRule" id="PRU00220"/>
    </source>
</evidence>
<evidence type="ECO:0000255" key="5">
    <source>
        <dbReference type="PROSITE-ProRule" id="PRU00653"/>
    </source>
</evidence>
<evidence type="ECO:0000305" key="6"/>
<feature type="signal peptide" evidence="2">
    <location>
        <begin position="1"/>
        <end position="23"/>
    </location>
</feature>
<feature type="chain" id="PRO_0000014410" description="CCN family member 5">
    <location>
        <begin position="24"/>
        <end position="251"/>
    </location>
</feature>
<feature type="domain" description="IGFBP N-terminal" evidence="5">
    <location>
        <begin position="24"/>
        <end position="103"/>
    </location>
</feature>
<feature type="domain" description="VWFC" evidence="4">
    <location>
        <begin position="98"/>
        <end position="164"/>
    </location>
</feature>
<feature type="domain" description="TSP type-1" evidence="3">
    <location>
        <begin position="195"/>
        <end position="239"/>
    </location>
</feature>
<feature type="glycosylation site" description="N-linked (GlcNAc...) asparagine" evidence="2">
    <location>
        <position position="197"/>
    </location>
</feature>
<feature type="disulfide bond" evidence="5">
    <location>
        <begin position="26"/>
        <end position="50"/>
    </location>
</feature>
<feature type="disulfide bond" evidence="5">
    <location>
        <begin position="30"/>
        <end position="52"/>
    </location>
</feature>
<feature type="disulfide bond" evidence="5">
    <location>
        <begin position="32"/>
        <end position="53"/>
    </location>
</feature>
<feature type="disulfide bond" evidence="5">
    <location>
        <begin position="39"/>
        <end position="56"/>
    </location>
</feature>
<feature type="disulfide bond" evidence="5">
    <location>
        <begin position="64"/>
        <end position="78"/>
    </location>
</feature>
<feature type="disulfide bond" evidence="5">
    <location>
        <begin position="70"/>
        <end position="100"/>
    </location>
</feature>
<feature type="sequence conflict" description="In Ref. 3; AAH32877." evidence="6" ref="3">
    <original>S</original>
    <variation>A</variation>
    <location>
        <position position="23"/>
    </location>
</feature>
<feature type="sequence conflict" description="In Ref. 3; AAH32877." evidence="6" ref="3">
    <original>D</original>
    <variation>N</variation>
    <location>
        <position position="71"/>
    </location>
</feature>
<feature type="sequence conflict" description="In Ref. 3; AAH32877." evidence="6" ref="3">
    <original>A</original>
    <variation>V</variation>
    <location>
        <position position="89"/>
    </location>
</feature>
<name>CCN5_MOUSE</name>
<comment type="function">
    <text evidence="1">May play an important role in modulating bone turnover. Promotes the adhesion of osteoblast cells and inhibits the binding of fibrinogen to integrin receptors. In addition, inhibits osteocalcin production (By similarity).</text>
</comment>
<comment type="subcellular location">
    <subcellularLocation>
        <location evidence="6">Secreted</location>
    </subcellularLocation>
</comment>
<comment type="similarity">
    <text evidence="6">Belongs to the CCN family.</text>
</comment>
<reference key="1">
    <citation type="journal article" date="1998" name="Proc. Natl. Acad. Sci. U.S.A.">
        <title>WISP genes are members of the connective tissue growth factor family that are up-regulated in wnt-1-transformed cells and aberrantly expressed in human colon tumors.</title>
        <authorList>
            <person name="Pennica D."/>
            <person name="Swanson T.A."/>
            <person name="Welsh J.W."/>
            <person name="Roy M.A."/>
            <person name="Lawrence D.A."/>
            <person name="Lee J."/>
            <person name="Brush J."/>
            <person name="Taneyhill L.A."/>
            <person name="Deuel B."/>
            <person name="Lew M."/>
            <person name="Watanabe C."/>
            <person name="Cohen R.L."/>
            <person name="Melham M.F."/>
            <person name="Finley G.G."/>
            <person name="Quirke P."/>
            <person name="Goddard A.D."/>
            <person name="Hillan K.J."/>
            <person name="Gurney A.L."/>
            <person name="Botstein D."/>
            <person name="Levine A.J."/>
        </authorList>
    </citation>
    <scope>NUCLEOTIDE SEQUENCE [MRNA]</scope>
    <source>
        <tissue>Mammary gland</tissue>
    </source>
</reference>
<reference key="2">
    <citation type="journal article" date="1999" name="J. Biol. Chem.">
        <title>Identification and cloning of a connective tissue growth factor-like cDNA from human osteoblasts encoding a novel regulator of osteoblast functions.</title>
        <authorList>
            <person name="Kumar S."/>
            <person name="Hand A.T."/>
            <person name="Connor J.R."/>
            <person name="Dodds R.A."/>
            <person name="Ryan P.J."/>
            <person name="Trill J.J."/>
            <person name="Fisher S.M."/>
            <person name="Nuttall M.E."/>
            <person name="Lipshutz D.B."/>
            <person name="Zou C."/>
            <person name="Hwang S.M."/>
            <person name="Votta B.J."/>
            <person name="James I.E."/>
            <person name="Rieman D.J."/>
            <person name="Gowen M."/>
            <person name="Lee J.C."/>
        </authorList>
    </citation>
    <scope>NUCLEOTIDE SEQUENCE [MRNA]</scope>
    <source>
        <tissue>Lung</tissue>
    </source>
</reference>
<reference key="3">
    <citation type="journal article" date="2004" name="Genome Res.">
        <title>The status, quality, and expansion of the NIH full-length cDNA project: the Mammalian Gene Collection (MGC).</title>
        <authorList>
            <consortium name="The MGC Project Team"/>
        </authorList>
    </citation>
    <scope>NUCLEOTIDE SEQUENCE [LARGE SCALE MRNA]</scope>
    <source>
        <strain>C57BL/6J</strain>
        <tissue>Mammary gland</tissue>
    </source>
</reference>
<dbReference type="EMBL" id="AF100778">
    <property type="protein sequence ID" value="AAC96320.1"/>
    <property type="molecule type" value="mRNA"/>
</dbReference>
<dbReference type="EMBL" id="AF126063">
    <property type="protein sequence ID" value="AAD18058.1"/>
    <property type="molecule type" value="mRNA"/>
</dbReference>
<dbReference type="EMBL" id="BC032877">
    <property type="protein sequence ID" value="AAH32877.1"/>
    <property type="molecule type" value="mRNA"/>
</dbReference>
<dbReference type="CCDS" id="CCDS17016.1"/>
<dbReference type="RefSeq" id="NP_058569.2">
    <property type="nucleotide sequence ID" value="NM_016873.2"/>
</dbReference>
<dbReference type="SMR" id="Q9Z0G4"/>
<dbReference type="FunCoup" id="Q9Z0G4">
    <property type="interactions" value="33"/>
</dbReference>
<dbReference type="STRING" id="10090.ENSMUSP00000029188"/>
<dbReference type="GlyCosmos" id="Q9Z0G4">
    <property type="glycosylation" value="1 site, No reported glycans"/>
</dbReference>
<dbReference type="GlyGen" id="Q9Z0G4">
    <property type="glycosylation" value="1 site"/>
</dbReference>
<dbReference type="PaxDb" id="10090-ENSMUSP00000029188"/>
<dbReference type="ProteomicsDB" id="297850"/>
<dbReference type="DNASU" id="22403"/>
<dbReference type="GeneID" id="22403"/>
<dbReference type="KEGG" id="mmu:22403"/>
<dbReference type="AGR" id="MGI:1328326"/>
<dbReference type="CTD" id="8839"/>
<dbReference type="MGI" id="MGI:1328326">
    <property type="gene designation" value="Ccn5"/>
</dbReference>
<dbReference type="eggNOG" id="ENOG502RXIT">
    <property type="taxonomic scope" value="Eukaryota"/>
</dbReference>
<dbReference type="InParanoid" id="Q9Z0G4"/>
<dbReference type="OrthoDB" id="365605at2759"/>
<dbReference type="PhylomeDB" id="Q9Z0G4"/>
<dbReference type="BioGRID-ORCS" id="22403">
    <property type="hits" value="2 hits in 78 CRISPR screens"/>
</dbReference>
<dbReference type="ChiTaRS" id="Ccn5">
    <property type="organism name" value="mouse"/>
</dbReference>
<dbReference type="PRO" id="PR:Q9Z0G4"/>
<dbReference type="Proteomes" id="UP000000589">
    <property type="component" value="Unplaced"/>
</dbReference>
<dbReference type="RNAct" id="Q9Z0G4">
    <property type="molecule type" value="protein"/>
</dbReference>
<dbReference type="GO" id="GO:0005615">
    <property type="term" value="C:extracellular space"/>
    <property type="evidence" value="ECO:0000314"/>
    <property type="project" value="UniProtKB"/>
</dbReference>
<dbReference type="GO" id="GO:0005634">
    <property type="term" value="C:nucleus"/>
    <property type="evidence" value="ECO:0000314"/>
    <property type="project" value="UniProtKB"/>
</dbReference>
<dbReference type="GO" id="GO:0005886">
    <property type="term" value="C:plasma membrane"/>
    <property type="evidence" value="ECO:0000314"/>
    <property type="project" value="MGI"/>
</dbReference>
<dbReference type="GO" id="GO:0008083">
    <property type="term" value="F:growth factor activity"/>
    <property type="evidence" value="ECO:0000247"/>
    <property type="project" value="MGI"/>
</dbReference>
<dbReference type="GO" id="GO:0007155">
    <property type="term" value="P:cell adhesion"/>
    <property type="evidence" value="ECO:0007669"/>
    <property type="project" value="UniProtKB-KW"/>
</dbReference>
<dbReference type="GO" id="GO:0001558">
    <property type="term" value="P:regulation of cell growth"/>
    <property type="evidence" value="ECO:0000314"/>
    <property type="project" value="MGI"/>
</dbReference>
<dbReference type="FunFam" id="2.20.100.10:FF:000084">
    <property type="entry name" value="WNT1-inducible-signaling pathway protein 2 isoform X1"/>
    <property type="match status" value="1"/>
</dbReference>
<dbReference type="Gene3D" id="2.10.70.10">
    <property type="entry name" value="Complement Module, domain 1"/>
    <property type="match status" value="1"/>
</dbReference>
<dbReference type="Gene3D" id="2.20.100.10">
    <property type="entry name" value="Thrombospondin type-1 (TSP1) repeat"/>
    <property type="match status" value="1"/>
</dbReference>
<dbReference type="InterPro" id="IPR050941">
    <property type="entry name" value="CCN"/>
</dbReference>
<dbReference type="InterPro" id="IPR009030">
    <property type="entry name" value="Growth_fac_rcpt_cys_sf"/>
</dbReference>
<dbReference type="InterPro" id="IPR000867">
    <property type="entry name" value="IGFBP-like"/>
</dbReference>
<dbReference type="InterPro" id="IPR017891">
    <property type="entry name" value="Insulin_GF-bd_Cys-rich_CS"/>
</dbReference>
<dbReference type="InterPro" id="IPR043973">
    <property type="entry name" value="TSP1_CCN"/>
</dbReference>
<dbReference type="InterPro" id="IPR000884">
    <property type="entry name" value="TSP1_rpt"/>
</dbReference>
<dbReference type="InterPro" id="IPR036383">
    <property type="entry name" value="TSP1_rpt_sf"/>
</dbReference>
<dbReference type="InterPro" id="IPR001007">
    <property type="entry name" value="VWF_dom"/>
</dbReference>
<dbReference type="PANTHER" id="PTHR11348:SF22">
    <property type="entry name" value="CCN FAMILY MEMBER 5"/>
    <property type="match status" value="1"/>
</dbReference>
<dbReference type="PANTHER" id="PTHR11348">
    <property type="entry name" value="CONNECTIVE TISSUE GROWTH FACTOR-RELATED"/>
    <property type="match status" value="1"/>
</dbReference>
<dbReference type="Pfam" id="PF00219">
    <property type="entry name" value="IGFBP"/>
    <property type="match status" value="1"/>
</dbReference>
<dbReference type="Pfam" id="PF19035">
    <property type="entry name" value="TSP1_CCN"/>
    <property type="match status" value="1"/>
</dbReference>
<dbReference type="Pfam" id="PF00093">
    <property type="entry name" value="VWC"/>
    <property type="match status" value="1"/>
</dbReference>
<dbReference type="SMART" id="SM00121">
    <property type="entry name" value="IB"/>
    <property type="match status" value="1"/>
</dbReference>
<dbReference type="SMART" id="SM00214">
    <property type="entry name" value="VWC"/>
    <property type="match status" value="1"/>
</dbReference>
<dbReference type="SUPFAM" id="SSF57603">
    <property type="entry name" value="FnI-like domain"/>
    <property type="match status" value="1"/>
</dbReference>
<dbReference type="SUPFAM" id="SSF57184">
    <property type="entry name" value="Growth factor receptor domain"/>
    <property type="match status" value="1"/>
</dbReference>
<dbReference type="SUPFAM" id="SSF82895">
    <property type="entry name" value="TSP-1 type 1 repeat"/>
    <property type="match status" value="1"/>
</dbReference>
<dbReference type="PROSITE" id="PS00222">
    <property type="entry name" value="IGFBP_N_1"/>
    <property type="match status" value="1"/>
</dbReference>
<dbReference type="PROSITE" id="PS51323">
    <property type="entry name" value="IGFBP_N_2"/>
    <property type="match status" value="1"/>
</dbReference>
<dbReference type="PROSITE" id="PS50092">
    <property type="entry name" value="TSP1"/>
    <property type="match status" value="1"/>
</dbReference>
<dbReference type="PROSITE" id="PS01208">
    <property type="entry name" value="VWFC_1"/>
    <property type="match status" value="1"/>
</dbReference>
<dbReference type="PROSITE" id="PS50184">
    <property type="entry name" value="VWFC_2"/>
    <property type="match status" value="1"/>
</dbReference>
<organism>
    <name type="scientific">Mus musculus</name>
    <name type="common">Mouse</name>
    <dbReference type="NCBI Taxonomy" id="10090"/>
    <lineage>
        <taxon>Eukaryota</taxon>
        <taxon>Metazoa</taxon>
        <taxon>Chordata</taxon>
        <taxon>Craniata</taxon>
        <taxon>Vertebrata</taxon>
        <taxon>Euteleostomi</taxon>
        <taxon>Mammalia</taxon>
        <taxon>Eutheria</taxon>
        <taxon>Euarchontoglires</taxon>
        <taxon>Glires</taxon>
        <taxon>Rodentia</taxon>
        <taxon>Myomorpha</taxon>
        <taxon>Muroidea</taxon>
        <taxon>Muridae</taxon>
        <taxon>Murinae</taxon>
        <taxon>Mus</taxon>
        <taxon>Mus</taxon>
    </lineage>
</organism>
<keyword id="KW-0130">Cell adhesion</keyword>
<keyword id="KW-1015">Disulfide bond</keyword>
<keyword id="KW-0325">Glycoprotein</keyword>
<keyword id="KW-1185">Reference proteome</keyword>
<keyword id="KW-0964">Secreted</keyword>
<keyword id="KW-0732">Signal</keyword>
<proteinExistence type="evidence at transcript level"/>
<protein>
    <recommendedName>
        <fullName evidence="6">CCN family member 5</fullName>
    </recommendedName>
    <alternativeName>
        <fullName>Connective tissue growth factor-like protein</fullName>
        <shortName>CTGF-L</shortName>
    </alternativeName>
    <alternativeName>
        <fullName>WNT1-inducible-signaling pathway protein 2</fullName>
        <shortName>WISP-2</shortName>
    </alternativeName>
</protein>